<dbReference type="EC" id="2.7.8.13" evidence="1"/>
<dbReference type="EMBL" id="CP000721">
    <property type="protein sequence ID" value="ABR33756.1"/>
    <property type="molecule type" value="Genomic_DNA"/>
</dbReference>
<dbReference type="RefSeq" id="WP_011968908.1">
    <property type="nucleotide sequence ID" value="NC_009617.1"/>
</dbReference>
<dbReference type="SMR" id="A6LTS6"/>
<dbReference type="GeneID" id="66344550"/>
<dbReference type="KEGG" id="cbe:Cbei_1582"/>
<dbReference type="eggNOG" id="COG0472">
    <property type="taxonomic scope" value="Bacteria"/>
</dbReference>
<dbReference type="HOGENOM" id="CLU_023982_0_1_9"/>
<dbReference type="UniPathway" id="UPA00219"/>
<dbReference type="Proteomes" id="UP000000565">
    <property type="component" value="Chromosome"/>
</dbReference>
<dbReference type="GO" id="GO:0005886">
    <property type="term" value="C:plasma membrane"/>
    <property type="evidence" value="ECO:0007669"/>
    <property type="project" value="UniProtKB-SubCell"/>
</dbReference>
<dbReference type="GO" id="GO:0046872">
    <property type="term" value="F:metal ion binding"/>
    <property type="evidence" value="ECO:0007669"/>
    <property type="project" value="UniProtKB-KW"/>
</dbReference>
<dbReference type="GO" id="GO:0008963">
    <property type="term" value="F:phospho-N-acetylmuramoyl-pentapeptide-transferase activity"/>
    <property type="evidence" value="ECO:0007669"/>
    <property type="project" value="UniProtKB-UniRule"/>
</dbReference>
<dbReference type="GO" id="GO:0051992">
    <property type="term" value="F:UDP-N-acetylmuramoyl-L-alanyl-D-glutamyl-meso-2,6-diaminopimelyl-D-alanyl-D-alanine:undecaprenyl-phosphate transferase activity"/>
    <property type="evidence" value="ECO:0007669"/>
    <property type="project" value="RHEA"/>
</dbReference>
<dbReference type="GO" id="GO:0051301">
    <property type="term" value="P:cell division"/>
    <property type="evidence" value="ECO:0007669"/>
    <property type="project" value="UniProtKB-KW"/>
</dbReference>
<dbReference type="GO" id="GO:0071555">
    <property type="term" value="P:cell wall organization"/>
    <property type="evidence" value="ECO:0007669"/>
    <property type="project" value="UniProtKB-KW"/>
</dbReference>
<dbReference type="GO" id="GO:0009252">
    <property type="term" value="P:peptidoglycan biosynthetic process"/>
    <property type="evidence" value="ECO:0007669"/>
    <property type="project" value="UniProtKB-UniRule"/>
</dbReference>
<dbReference type="GO" id="GO:0008360">
    <property type="term" value="P:regulation of cell shape"/>
    <property type="evidence" value="ECO:0007669"/>
    <property type="project" value="UniProtKB-KW"/>
</dbReference>
<dbReference type="CDD" id="cd06852">
    <property type="entry name" value="GT_MraY"/>
    <property type="match status" value="1"/>
</dbReference>
<dbReference type="HAMAP" id="MF_00038">
    <property type="entry name" value="MraY"/>
    <property type="match status" value="1"/>
</dbReference>
<dbReference type="InterPro" id="IPR000715">
    <property type="entry name" value="Glycosyl_transferase_4"/>
</dbReference>
<dbReference type="InterPro" id="IPR003524">
    <property type="entry name" value="PNAcMuramoyl-5peptid_Trfase"/>
</dbReference>
<dbReference type="InterPro" id="IPR018480">
    <property type="entry name" value="PNAcMuramoyl-5peptid_Trfase_CS"/>
</dbReference>
<dbReference type="NCBIfam" id="TIGR00445">
    <property type="entry name" value="mraY"/>
    <property type="match status" value="1"/>
</dbReference>
<dbReference type="PANTHER" id="PTHR22926">
    <property type="entry name" value="PHOSPHO-N-ACETYLMURAMOYL-PENTAPEPTIDE-TRANSFERASE"/>
    <property type="match status" value="1"/>
</dbReference>
<dbReference type="PANTHER" id="PTHR22926:SF5">
    <property type="entry name" value="PHOSPHO-N-ACETYLMURAMOYL-PENTAPEPTIDE-TRANSFERASE HOMOLOG"/>
    <property type="match status" value="1"/>
</dbReference>
<dbReference type="Pfam" id="PF00953">
    <property type="entry name" value="Glycos_transf_4"/>
    <property type="match status" value="1"/>
</dbReference>
<dbReference type="Pfam" id="PF10555">
    <property type="entry name" value="MraY_sig1"/>
    <property type="match status" value="1"/>
</dbReference>
<dbReference type="PROSITE" id="PS01347">
    <property type="entry name" value="MRAY_1"/>
    <property type="match status" value="1"/>
</dbReference>
<dbReference type="PROSITE" id="PS01348">
    <property type="entry name" value="MRAY_2"/>
    <property type="match status" value="1"/>
</dbReference>
<reference key="1">
    <citation type="submission" date="2007-06" db="EMBL/GenBank/DDBJ databases">
        <title>Complete sequence of Clostridium beijerinckii NCIMB 8052.</title>
        <authorList>
            <consortium name="US DOE Joint Genome Institute"/>
            <person name="Copeland A."/>
            <person name="Lucas S."/>
            <person name="Lapidus A."/>
            <person name="Barry K."/>
            <person name="Detter J.C."/>
            <person name="Glavina del Rio T."/>
            <person name="Hammon N."/>
            <person name="Israni S."/>
            <person name="Dalin E."/>
            <person name="Tice H."/>
            <person name="Pitluck S."/>
            <person name="Sims D."/>
            <person name="Brettin T."/>
            <person name="Bruce D."/>
            <person name="Tapia R."/>
            <person name="Brainard J."/>
            <person name="Schmutz J."/>
            <person name="Larimer F."/>
            <person name="Land M."/>
            <person name="Hauser L."/>
            <person name="Kyrpides N."/>
            <person name="Mikhailova N."/>
            <person name="Bennet G."/>
            <person name="Cann I."/>
            <person name="Chen J.-S."/>
            <person name="Contreras A.L."/>
            <person name="Jones D."/>
            <person name="Kashket E."/>
            <person name="Mitchell W."/>
            <person name="Stoddard S."/>
            <person name="Schwarz W."/>
            <person name="Qureshi N."/>
            <person name="Young M."/>
            <person name="Shi Z."/>
            <person name="Ezeji T."/>
            <person name="White B."/>
            <person name="Blaschek H."/>
            <person name="Richardson P."/>
        </authorList>
    </citation>
    <scope>NUCLEOTIDE SEQUENCE [LARGE SCALE GENOMIC DNA]</scope>
    <source>
        <strain>ATCC 51743 / NCIMB 8052</strain>
    </source>
</reference>
<sequence>MGEAINLLINSKILAPLIMGFLFSIVLGPIFIPILHKLKFGQNIRKEGPKSHQKKSGTPTMGGLIFFIATATAILIMGQKPMSREMILLYSFLAFGFIGFLDDILKIIHKDNLGLRAAQKMILLVLFSVALAWYGYTNVGTDILIPFINQNFRLNLGILYIPFIVVYYAAVTNAVNLTDGIDGLATSVTVIVLTFFAIIGFRTQNVEVAVFAIALAGALLGFLKFNAFPAKIFMGDTGSLALGGVIGTIALMLKMELFVIIVGGIYLIETLSVIIQVTSFKLTGKRVFRMSPIHHHFEQVGWSEVKIVTIFSSITAILCIIGFVAL</sequence>
<organism>
    <name type="scientific">Clostridium beijerinckii (strain ATCC 51743 / NCIMB 8052)</name>
    <name type="common">Clostridium acetobutylicum</name>
    <dbReference type="NCBI Taxonomy" id="290402"/>
    <lineage>
        <taxon>Bacteria</taxon>
        <taxon>Bacillati</taxon>
        <taxon>Bacillota</taxon>
        <taxon>Clostridia</taxon>
        <taxon>Eubacteriales</taxon>
        <taxon>Clostridiaceae</taxon>
        <taxon>Clostridium</taxon>
    </lineage>
</organism>
<comment type="function">
    <text evidence="1">Catalyzes the initial step of the lipid cycle reactions in the biosynthesis of the cell wall peptidoglycan: transfers peptidoglycan precursor phospho-MurNAc-pentapeptide from UDP-MurNAc-pentapeptide onto the lipid carrier undecaprenyl phosphate, yielding undecaprenyl-pyrophosphoryl-MurNAc-pentapeptide, known as lipid I.</text>
</comment>
<comment type="catalytic activity">
    <reaction evidence="1">
        <text>UDP-N-acetyl-alpha-D-muramoyl-L-alanyl-gamma-D-glutamyl-meso-2,6-diaminopimeloyl-D-alanyl-D-alanine + di-trans,octa-cis-undecaprenyl phosphate = di-trans,octa-cis-undecaprenyl diphospho-N-acetyl-alpha-D-muramoyl-L-alanyl-D-glutamyl-meso-2,6-diaminopimeloyl-D-alanyl-D-alanine + UMP</text>
        <dbReference type="Rhea" id="RHEA:28386"/>
        <dbReference type="ChEBI" id="CHEBI:57865"/>
        <dbReference type="ChEBI" id="CHEBI:60392"/>
        <dbReference type="ChEBI" id="CHEBI:61386"/>
        <dbReference type="ChEBI" id="CHEBI:61387"/>
        <dbReference type="EC" id="2.7.8.13"/>
    </reaction>
</comment>
<comment type="cofactor">
    <cofactor evidence="1">
        <name>Mg(2+)</name>
        <dbReference type="ChEBI" id="CHEBI:18420"/>
    </cofactor>
</comment>
<comment type="pathway">
    <text evidence="1">Cell wall biogenesis; peptidoglycan biosynthesis.</text>
</comment>
<comment type="subcellular location">
    <subcellularLocation>
        <location evidence="1">Cell membrane</location>
        <topology evidence="1">Multi-pass membrane protein</topology>
    </subcellularLocation>
</comment>
<comment type="similarity">
    <text evidence="1">Belongs to the glycosyltransferase 4 family. MraY subfamily.</text>
</comment>
<evidence type="ECO:0000255" key="1">
    <source>
        <dbReference type="HAMAP-Rule" id="MF_00038"/>
    </source>
</evidence>
<keyword id="KW-0131">Cell cycle</keyword>
<keyword id="KW-0132">Cell division</keyword>
<keyword id="KW-1003">Cell membrane</keyword>
<keyword id="KW-0133">Cell shape</keyword>
<keyword id="KW-0961">Cell wall biogenesis/degradation</keyword>
<keyword id="KW-0460">Magnesium</keyword>
<keyword id="KW-0472">Membrane</keyword>
<keyword id="KW-0479">Metal-binding</keyword>
<keyword id="KW-0573">Peptidoglycan synthesis</keyword>
<keyword id="KW-0808">Transferase</keyword>
<keyword id="KW-0812">Transmembrane</keyword>
<keyword id="KW-1133">Transmembrane helix</keyword>
<gene>
    <name evidence="1" type="primary">mraY</name>
    <name type="ordered locus">Cbei_1582</name>
</gene>
<proteinExistence type="inferred from homology"/>
<accession>A6LTS6</accession>
<protein>
    <recommendedName>
        <fullName evidence="1">Phospho-N-acetylmuramoyl-pentapeptide-transferase</fullName>
        <ecNumber evidence="1">2.7.8.13</ecNumber>
    </recommendedName>
    <alternativeName>
        <fullName evidence="1">UDP-MurNAc-pentapeptide phosphotransferase</fullName>
    </alternativeName>
</protein>
<name>MRAY_CLOB8</name>
<feature type="chain" id="PRO_0000332529" description="Phospho-N-acetylmuramoyl-pentapeptide-transferase">
    <location>
        <begin position="1"/>
        <end position="326"/>
    </location>
</feature>
<feature type="transmembrane region" description="Helical" evidence="1">
    <location>
        <begin position="13"/>
        <end position="33"/>
    </location>
</feature>
<feature type="transmembrane region" description="Helical" evidence="1">
    <location>
        <begin position="57"/>
        <end position="77"/>
    </location>
</feature>
<feature type="transmembrane region" description="Helical" evidence="1">
    <location>
        <begin position="85"/>
        <end position="105"/>
    </location>
</feature>
<feature type="transmembrane region" description="Helical" evidence="1">
    <location>
        <begin position="121"/>
        <end position="141"/>
    </location>
</feature>
<feature type="transmembrane region" description="Helical" evidence="1">
    <location>
        <begin position="155"/>
        <end position="175"/>
    </location>
</feature>
<feature type="transmembrane region" description="Helical" evidence="1">
    <location>
        <begin position="181"/>
        <end position="201"/>
    </location>
</feature>
<feature type="transmembrane region" description="Helical" evidence="1">
    <location>
        <begin position="208"/>
        <end position="228"/>
    </location>
</feature>
<feature type="transmembrane region" description="Helical" evidence="1">
    <location>
        <begin position="232"/>
        <end position="252"/>
    </location>
</feature>
<feature type="transmembrane region" description="Helical" evidence="1">
    <location>
        <begin position="257"/>
        <end position="277"/>
    </location>
</feature>
<feature type="transmembrane region" description="Helical" evidence="1">
    <location>
        <begin position="305"/>
        <end position="325"/>
    </location>
</feature>